<name>OGL_DICD3</name>
<proteinExistence type="evidence at transcript level"/>
<evidence type="ECO:0000305" key="1"/>
<keyword id="KW-0456">Lyase</keyword>
<keyword id="KW-0574">Periplasm</keyword>
<keyword id="KW-1185">Reference proteome</keyword>
<sequence length="388" mass="44186">MAKGKKLSFSFHTYQDSVTGTEVVRLTPPDVICHRNYFYQKCFSNDGSKLLFGGAFDGPWNYYLLDLKTQQATQLTEGTGDNTFGGFLSPDDDALYYVKNVRNLMRVDLNTLEETNIYQVPDDWVGYGTWVANSDCTKMVGIEIKKEDWKPLTDWKKFQEFYFTNPCCRLIRIDLKTGEATTILKENQWLGHPIYRPGDDNTVAFCHEGPHDLVDARMWFINEDGSNMRKVKEHAPGESCTHEFWVPNGSALAYVSYLKGSTNRFICSVDPVTLENRQLTEMPPCSHLMSNYDGTLMVGDGCNAPVDVKDDGGYKIENDPFLYVFNMKTGKHFQVAQHNTSWEVLEGDRQVTHPHPSFTPDDKHILFTSDVDGKPALYLAKVPDSVWQ</sequence>
<accession>P21258</accession>
<accession>E0SDE7</accession>
<organism>
    <name type="scientific">Dickeya dadantii (strain 3937)</name>
    <name type="common">Erwinia chrysanthemi (strain 3937)</name>
    <dbReference type="NCBI Taxonomy" id="198628"/>
    <lineage>
        <taxon>Bacteria</taxon>
        <taxon>Pseudomonadati</taxon>
        <taxon>Pseudomonadota</taxon>
        <taxon>Gammaproteobacteria</taxon>
        <taxon>Enterobacterales</taxon>
        <taxon>Pectobacteriaceae</taxon>
        <taxon>Dickeya</taxon>
    </lineage>
</organism>
<feature type="chain" id="PRO_0000058034" description="Oligogalacturonate lyase">
    <location>
        <begin position="1"/>
        <end position="388"/>
    </location>
</feature>
<feature type="sequence conflict" description="In Ref. 1; AAA24825." evidence="1" ref="1">
    <original>I</original>
    <variation>T</variation>
    <location>
        <position position="316"/>
    </location>
</feature>
<comment type="function">
    <text>Involved in degradation of pectin, which causes soft-rod disease in plants.</text>
</comment>
<comment type="catalytic activity">
    <reaction>
        <text>4-(4-deoxy-alpha-D-galact-4-enuronosyl)-D-galacturonate = 2 5-dehydro-4-deoxy-D-glucuronate</text>
        <dbReference type="Rhea" id="RHEA:20269"/>
        <dbReference type="ChEBI" id="CHEBI:17117"/>
        <dbReference type="ChEBI" id="CHEBI:60189"/>
        <dbReference type="EC" id="4.2.2.6"/>
    </reaction>
</comment>
<comment type="pathway">
    <text>Glycan metabolism; pectin degradation; 2-dehydro-3-deoxy-D-gluconate from pectin: step 3/5.</text>
</comment>
<comment type="subcellular location">
    <subcellularLocation>
        <location evidence="1">Periplasm</location>
    </subcellularLocation>
</comment>
<comment type="induction">
    <text>By galacturonate and polygalacturonate, and subjected to catabolite repression.</text>
</comment>
<dbReference type="EC" id="4.2.2.6"/>
<dbReference type="EMBL" id="M33583">
    <property type="protein sequence ID" value="AAA24825.1"/>
    <property type="molecule type" value="Genomic_DNA"/>
</dbReference>
<dbReference type="EMBL" id="CP002038">
    <property type="protein sequence ID" value="ADM98639.1"/>
    <property type="molecule type" value="Genomic_DNA"/>
</dbReference>
<dbReference type="PIR" id="JQ0189">
    <property type="entry name" value="JQ0189"/>
</dbReference>
<dbReference type="RefSeq" id="WP_013318086.1">
    <property type="nucleotide sequence ID" value="NC_014500.1"/>
</dbReference>
<dbReference type="SMR" id="P21258"/>
<dbReference type="STRING" id="198628.Dda3937_03686"/>
<dbReference type="CAZy" id="PL22">
    <property type="family name" value="Polysaccharide Lyase Family 22"/>
</dbReference>
<dbReference type="GeneID" id="55489248"/>
<dbReference type="KEGG" id="ddd:Dda3937_03686"/>
<dbReference type="PATRIC" id="fig|198628.6.peg.2418"/>
<dbReference type="eggNOG" id="COG0823">
    <property type="taxonomic scope" value="Bacteria"/>
</dbReference>
<dbReference type="HOGENOM" id="CLU_057268_0_0_6"/>
<dbReference type="OrthoDB" id="8432779at2"/>
<dbReference type="BioCyc" id="MetaCyc:MONOMER-15657"/>
<dbReference type="UniPathway" id="UPA00545">
    <property type="reaction ID" value="UER00825"/>
</dbReference>
<dbReference type="Proteomes" id="UP000006859">
    <property type="component" value="Chromosome"/>
</dbReference>
<dbReference type="GO" id="GO:0042597">
    <property type="term" value="C:periplasmic space"/>
    <property type="evidence" value="ECO:0007669"/>
    <property type="project" value="UniProtKB-SubCell"/>
</dbReference>
<dbReference type="GO" id="GO:0047487">
    <property type="term" value="F:oligogalacturonide lyase activity"/>
    <property type="evidence" value="ECO:0000314"/>
    <property type="project" value="ASAP"/>
</dbReference>
<dbReference type="GO" id="GO:0045490">
    <property type="term" value="P:pectin catabolic process"/>
    <property type="evidence" value="ECO:0000314"/>
    <property type="project" value="ASAP"/>
</dbReference>
<dbReference type="Gene3D" id="2.130.10.10">
    <property type="entry name" value="YVTN repeat-like/Quinoprotein amine dehydrogenase"/>
    <property type="match status" value="1"/>
</dbReference>
<dbReference type="InterPro" id="IPR027946">
    <property type="entry name" value="Ogl_dom"/>
</dbReference>
<dbReference type="InterPro" id="IPR015943">
    <property type="entry name" value="WD40/YVTN_repeat-like_dom_sf"/>
</dbReference>
<dbReference type="PANTHER" id="PTHR36842:SF1">
    <property type="entry name" value="PROTEIN TOLB"/>
    <property type="match status" value="1"/>
</dbReference>
<dbReference type="PANTHER" id="PTHR36842">
    <property type="entry name" value="PROTEIN TOLB HOMOLOG"/>
    <property type="match status" value="1"/>
</dbReference>
<dbReference type="Pfam" id="PF14583">
    <property type="entry name" value="Pectate_lyase22"/>
    <property type="match status" value="1"/>
</dbReference>
<dbReference type="SUPFAM" id="SSF82171">
    <property type="entry name" value="DPP6 N-terminal domain-like"/>
    <property type="match status" value="1"/>
</dbReference>
<gene>
    <name type="primary">ogl</name>
    <name type="ordered locus">Dda3937_03686</name>
</gene>
<reference key="1">
    <citation type="journal article" date="1989" name="Gene">
        <title>Nucleotide sequences of the Erwinia chrysanthemi ogl and pelE genes negatively regulated by the kdgR gene product.</title>
        <authorList>
            <person name="Reverchon S."/>
            <person name="Huang Y."/>
            <person name="Bourson C."/>
            <person name="Robert-Baudouy J."/>
        </authorList>
    </citation>
    <scope>NUCLEOTIDE SEQUENCE [GENOMIC DNA]</scope>
    <source>
        <strain>3937</strain>
    </source>
</reference>
<reference key="2">
    <citation type="journal article" date="2011" name="J. Bacteriol.">
        <title>Genome sequence of the plant-pathogenic bacterium Dickeya dadantii 3937.</title>
        <authorList>
            <person name="Glasner J.D."/>
            <person name="Yang C.H."/>
            <person name="Reverchon S."/>
            <person name="Hugouvieux-Cotte-Pattat N."/>
            <person name="Condemine G."/>
            <person name="Bohin J.P."/>
            <person name="Van Gijsegem F."/>
            <person name="Yang S."/>
            <person name="Franza T."/>
            <person name="Expert D."/>
            <person name="Plunkett G. III"/>
            <person name="San Francisco M.J."/>
            <person name="Charkowski A.O."/>
            <person name="Py B."/>
            <person name="Bell K."/>
            <person name="Rauscher L."/>
            <person name="Rodriguez-Palenzuela P."/>
            <person name="Toussaint A."/>
            <person name="Holeva M.C."/>
            <person name="He S.Y."/>
            <person name="Douet V."/>
            <person name="Boccara M."/>
            <person name="Blanco C."/>
            <person name="Toth I."/>
            <person name="Anderson B.D."/>
            <person name="Biehl B.S."/>
            <person name="Mau B."/>
            <person name="Flynn S.M."/>
            <person name="Barras F."/>
            <person name="Lindeberg M."/>
            <person name="Birch P.R."/>
            <person name="Tsuyumu S."/>
            <person name="Shi X."/>
            <person name="Hibbing M."/>
            <person name="Yap M.N."/>
            <person name="Carpentier M."/>
            <person name="Dassa E."/>
            <person name="Umehara M."/>
            <person name="Kim J.F."/>
            <person name="Rusch M."/>
            <person name="Soni P."/>
            <person name="Mayhew G.F."/>
            <person name="Fouts D.E."/>
            <person name="Gill S.R."/>
            <person name="Blattner F.R."/>
            <person name="Keen N.T."/>
            <person name="Perna N.T."/>
        </authorList>
    </citation>
    <scope>NUCLEOTIDE SEQUENCE [LARGE SCALE GENOMIC DNA]</scope>
    <source>
        <strain>3937</strain>
    </source>
</reference>
<protein>
    <recommendedName>
        <fullName>Oligogalacturonate lyase</fullName>
        <ecNumber>4.2.2.6</ecNumber>
    </recommendedName>
</protein>